<protein>
    <recommendedName>
        <fullName>Fibroblast growth factor 2</fullName>
        <shortName>FGF-2</shortName>
    </recommendedName>
    <alternativeName>
        <fullName>Basic fibroblast growth factor</fullName>
        <shortName>bFGF</shortName>
    </alternativeName>
    <alternativeName>
        <fullName>Heparin-binding growth factor 2</fullName>
        <shortName>HBGF-2</shortName>
    </alternativeName>
</protein>
<comment type="function">
    <text evidence="2">Acts as a ligand for FGFR1, FGFR2, FGFR3 and FGFR4 (By similarity). Also acts as an integrin ligand which is required for FGF2 signaling (By similarity). Binds to integrin ITGAV:ITGB3 (By similarity). Plays an important role in the regulation of cell survival, cell division, cell differentiation and cell migration (By similarity). Functions as a potent mitogen in vitro (By similarity). Can induce angiogenesis (By similarity). Mediates phosphorylation of ERK1/2 and thereby promotes retinal lens fiber differentiation (By similarity).</text>
</comment>
<comment type="subunit">
    <text evidence="2 3 5">Monomer. Homodimer. Interacts with FGFR1, FGFR2, FGFR3 and FGFR4. Affinity between fibroblast growth factors (FGFs) and their receptors is increased by heparan sulfate glycosaminoglycans that function as coreceptors. Interacts with CSPG4, FGFBP1 and TEC. Found in a complex with FGFBP1, FGF1 and FGF2. Interacts with FGFBP3. Interacts with integrin ITGAV:ITGB3; the interaction is required for FGF2 signaling. Interacts with SNORC (via the extracellular domain). Interacts with GPC3 (PubMed:9065409).</text>
</comment>
<comment type="subcellular location">
    <subcellularLocation>
        <location evidence="2">Secreted</location>
    </subcellularLocation>
    <subcellularLocation>
        <location evidence="2">Nucleus</location>
    </subcellularLocation>
    <text evidence="2">Exported from cells by an endoplasmic reticulum (ER)/Golgi-independent mechanism (By similarity). Unconventional secretion of FGF2 occurs by direct translocation across the plasma membrane (By similarity). Binding of exogenous FGF2 to FGFR facilitates endocytosis followed by translocation of FGF2 across endosomal membrane into the cytosol (By similarity). Nuclear import from the cytosol requires the classical nuclear import machinery, involving proteins KPNA1 and KPNB1, as well as CEP57 (By similarity).</text>
</comment>
<comment type="tissue specificity">
    <text>Found in all tissues examined.</text>
</comment>
<comment type="PTM">
    <text evidence="1">Phosphorylation at Tyr-81 regulates FGF2 unconventional secretion.</text>
</comment>
<comment type="similarity">
    <text evidence="6">Belongs to the heparin-binding growth factors family.</text>
</comment>
<dbReference type="EMBL" id="M22427">
    <property type="protein sequence ID" value="AAA41210.1"/>
    <property type="molecule type" value="mRNA"/>
</dbReference>
<dbReference type="EMBL" id="X07285">
    <property type="protein sequence ID" value="CAA30265.1"/>
    <property type="molecule type" value="mRNA"/>
</dbReference>
<dbReference type="EMBL" id="U78079">
    <property type="protein sequence ID" value="AAC53225.1"/>
    <property type="molecule type" value="Genomic_DNA"/>
</dbReference>
<dbReference type="EMBL" id="X61697">
    <property type="protein sequence ID" value="CAA43863.1"/>
    <property type="molecule type" value="mRNA"/>
</dbReference>
<dbReference type="PIR" id="A31674">
    <property type="entry name" value="A31674"/>
</dbReference>
<dbReference type="RefSeq" id="NP_062178.1">
    <property type="nucleotide sequence ID" value="NM_019305.2"/>
</dbReference>
<dbReference type="SMR" id="P13109"/>
<dbReference type="BioGRID" id="248473">
    <property type="interactions" value="2"/>
</dbReference>
<dbReference type="FunCoup" id="P13109">
    <property type="interactions" value="741"/>
</dbReference>
<dbReference type="STRING" id="10116.ENSRNOP00000023388"/>
<dbReference type="PhosphoSitePlus" id="P13109"/>
<dbReference type="PaxDb" id="10116-ENSRNOP00000023388"/>
<dbReference type="Ensembl" id="ENSRNOT00000023388.6">
    <property type="protein sequence ID" value="ENSRNOP00000023388.4"/>
    <property type="gene ID" value="ENSRNOG00000017392.7"/>
</dbReference>
<dbReference type="GeneID" id="54250"/>
<dbReference type="KEGG" id="rno:54250"/>
<dbReference type="UCSC" id="RGD:2609">
    <property type="organism name" value="rat"/>
</dbReference>
<dbReference type="AGR" id="RGD:2609"/>
<dbReference type="CTD" id="2247"/>
<dbReference type="RGD" id="2609">
    <property type="gene designation" value="Fgf2"/>
</dbReference>
<dbReference type="eggNOG" id="KOG3885">
    <property type="taxonomic scope" value="Eukaryota"/>
</dbReference>
<dbReference type="GeneTree" id="ENSGT00940000161583"/>
<dbReference type="HOGENOM" id="CLU_081609_5_1_1"/>
<dbReference type="InParanoid" id="P13109"/>
<dbReference type="OMA" id="KGVCSNR"/>
<dbReference type="OrthoDB" id="5987799at2759"/>
<dbReference type="PhylomeDB" id="P13109"/>
<dbReference type="TreeFam" id="TF317805"/>
<dbReference type="Reactome" id="R-RNO-109704">
    <property type="pathway name" value="PI3K Cascade"/>
</dbReference>
<dbReference type="Reactome" id="R-RNO-1257604">
    <property type="pathway name" value="PIP3 activates AKT signaling"/>
</dbReference>
<dbReference type="Reactome" id="R-RNO-190322">
    <property type="pathway name" value="FGFR4 ligand binding and activation"/>
</dbReference>
<dbReference type="Reactome" id="R-RNO-190370">
    <property type="pathway name" value="FGFR1b ligand binding and activation"/>
</dbReference>
<dbReference type="Reactome" id="R-RNO-190372">
    <property type="pathway name" value="FGFR3c ligand binding and activation"/>
</dbReference>
<dbReference type="Reactome" id="R-RNO-190373">
    <property type="pathway name" value="FGFR1c ligand binding and activation"/>
</dbReference>
<dbReference type="Reactome" id="R-RNO-190375">
    <property type="pathway name" value="FGFR2c ligand binding and activation"/>
</dbReference>
<dbReference type="Reactome" id="R-RNO-190377">
    <property type="pathway name" value="FGFR2b ligand binding and activation"/>
</dbReference>
<dbReference type="Reactome" id="R-RNO-3000170">
    <property type="pathway name" value="Syndecan interactions"/>
</dbReference>
<dbReference type="Reactome" id="R-RNO-5654219">
    <property type="pathway name" value="Phospholipase C-mediated cascade: FGFR1"/>
</dbReference>
<dbReference type="Reactome" id="R-RNO-5654221">
    <property type="pathway name" value="Phospholipase C-mediated cascade, FGFR2"/>
</dbReference>
<dbReference type="Reactome" id="R-RNO-5654227">
    <property type="pathway name" value="Phospholipase C-mediated cascade, FGFR3"/>
</dbReference>
<dbReference type="Reactome" id="R-RNO-5654228">
    <property type="pathway name" value="Phospholipase C-mediated cascade, FGFR4"/>
</dbReference>
<dbReference type="Reactome" id="R-RNO-5654687">
    <property type="pathway name" value="Downstream signaling of activated FGFR1"/>
</dbReference>
<dbReference type="Reactome" id="R-RNO-5654688">
    <property type="pathway name" value="SHC-mediated cascade:FGFR1"/>
</dbReference>
<dbReference type="Reactome" id="R-RNO-5654689">
    <property type="pathway name" value="PI-3K cascade:FGFR1"/>
</dbReference>
<dbReference type="Reactome" id="R-RNO-5654693">
    <property type="pathway name" value="FRS-mediated FGFR1 signaling"/>
</dbReference>
<dbReference type="Reactome" id="R-RNO-5654695">
    <property type="pathway name" value="PI-3K cascade:FGFR2"/>
</dbReference>
<dbReference type="Reactome" id="R-RNO-5654699">
    <property type="pathway name" value="SHC-mediated cascade:FGFR2"/>
</dbReference>
<dbReference type="Reactome" id="R-RNO-5654700">
    <property type="pathway name" value="FRS-mediated FGFR2 signaling"/>
</dbReference>
<dbReference type="Reactome" id="R-RNO-5654704">
    <property type="pathway name" value="SHC-mediated cascade:FGFR3"/>
</dbReference>
<dbReference type="Reactome" id="R-RNO-5654706">
    <property type="pathway name" value="FRS-mediated FGFR3 signaling"/>
</dbReference>
<dbReference type="Reactome" id="R-RNO-5654710">
    <property type="pathway name" value="PI-3K cascade:FGFR3"/>
</dbReference>
<dbReference type="Reactome" id="R-RNO-5654712">
    <property type="pathway name" value="FRS-mediated FGFR4 signaling"/>
</dbReference>
<dbReference type="Reactome" id="R-RNO-5654719">
    <property type="pathway name" value="SHC-mediated cascade:FGFR4"/>
</dbReference>
<dbReference type="Reactome" id="R-RNO-5654720">
    <property type="pathway name" value="PI-3K cascade:FGFR4"/>
</dbReference>
<dbReference type="Reactome" id="R-RNO-5654726">
    <property type="pathway name" value="Negative regulation of FGFR1 signaling"/>
</dbReference>
<dbReference type="Reactome" id="R-RNO-5654727">
    <property type="pathway name" value="Negative regulation of FGFR2 signaling"/>
</dbReference>
<dbReference type="Reactome" id="R-RNO-5654732">
    <property type="pathway name" value="Negative regulation of FGFR3 signaling"/>
</dbReference>
<dbReference type="Reactome" id="R-RNO-5654733">
    <property type="pathway name" value="Negative regulation of FGFR4 signaling"/>
</dbReference>
<dbReference type="Reactome" id="R-RNO-5658623">
    <property type="pathway name" value="FGFRL1 modulation of FGFR1 signaling"/>
</dbReference>
<dbReference type="Reactome" id="R-RNO-5673001">
    <property type="pathway name" value="RAF/MAP kinase cascade"/>
</dbReference>
<dbReference type="Reactome" id="R-RNO-6811558">
    <property type="pathway name" value="PI5P, PP2A and IER3 Regulate PI3K/AKT Signaling"/>
</dbReference>
<dbReference type="Reactome" id="R-RNO-9839397">
    <property type="pathway name" value="TGFBR3 regulates FGF2 signaling"/>
</dbReference>
<dbReference type="PRO" id="PR:P13109"/>
<dbReference type="Proteomes" id="UP000002494">
    <property type="component" value="Chromosome 2"/>
</dbReference>
<dbReference type="Bgee" id="ENSRNOG00000017392">
    <property type="expression patterns" value="Expressed in quadriceps femoris and 12 other cell types or tissues"/>
</dbReference>
<dbReference type="GO" id="GO:0005737">
    <property type="term" value="C:cytoplasm"/>
    <property type="evidence" value="ECO:0000318"/>
    <property type="project" value="GO_Central"/>
</dbReference>
<dbReference type="GO" id="GO:0005615">
    <property type="term" value="C:extracellular space"/>
    <property type="evidence" value="ECO:0000314"/>
    <property type="project" value="RGD"/>
</dbReference>
<dbReference type="GO" id="GO:0005634">
    <property type="term" value="C:nucleus"/>
    <property type="evidence" value="ECO:0000318"/>
    <property type="project" value="GO_Central"/>
</dbReference>
<dbReference type="GO" id="GO:0042056">
    <property type="term" value="F:chemoattractant activity"/>
    <property type="evidence" value="ECO:0000266"/>
    <property type="project" value="RGD"/>
</dbReference>
<dbReference type="GO" id="GO:0019956">
    <property type="term" value="F:chemokine binding"/>
    <property type="evidence" value="ECO:0000266"/>
    <property type="project" value="RGD"/>
</dbReference>
<dbReference type="GO" id="GO:0005125">
    <property type="term" value="F:cytokine activity"/>
    <property type="evidence" value="ECO:0000266"/>
    <property type="project" value="RGD"/>
</dbReference>
<dbReference type="GO" id="GO:0005104">
    <property type="term" value="F:fibroblast growth factor receptor binding"/>
    <property type="evidence" value="ECO:0000353"/>
    <property type="project" value="MGI"/>
</dbReference>
<dbReference type="GO" id="GO:0008083">
    <property type="term" value="F:growth factor activity"/>
    <property type="evidence" value="ECO:0000266"/>
    <property type="project" value="RGD"/>
</dbReference>
<dbReference type="GO" id="GO:0008201">
    <property type="term" value="F:heparin binding"/>
    <property type="evidence" value="ECO:0007669"/>
    <property type="project" value="UniProtKB-KW"/>
</dbReference>
<dbReference type="GO" id="GO:0062072">
    <property type="term" value="F:histone H3K9me2/3 reader activity"/>
    <property type="evidence" value="ECO:0000314"/>
    <property type="project" value="RGD"/>
</dbReference>
<dbReference type="GO" id="GO:0042802">
    <property type="term" value="F:identical protein binding"/>
    <property type="evidence" value="ECO:0000266"/>
    <property type="project" value="RGD"/>
</dbReference>
<dbReference type="GO" id="GO:0005178">
    <property type="term" value="F:integrin binding"/>
    <property type="evidence" value="ECO:0000250"/>
    <property type="project" value="UniProtKB"/>
</dbReference>
<dbReference type="GO" id="GO:0090722">
    <property type="term" value="F:receptor-receptor interaction"/>
    <property type="evidence" value="ECO:0000266"/>
    <property type="project" value="RGD"/>
</dbReference>
<dbReference type="GO" id="GO:0001525">
    <property type="term" value="P:angiogenesis"/>
    <property type="evidence" value="ECO:0000266"/>
    <property type="project" value="RGD"/>
</dbReference>
<dbReference type="GO" id="GO:0060978">
    <property type="term" value="P:angiogenesis involved in coronary vascular morphogenesis"/>
    <property type="evidence" value="ECO:0000315"/>
    <property type="project" value="RGD"/>
</dbReference>
<dbReference type="GO" id="GO:0048149">
    <property type="term" value="P:behavioral response to ethanol"/>
    <property type="evidence" value="ECO:0000315"/>
    <property type="project" value="RGD"/>
</dbReference>
<dbReference type="GO" id="GO:0001658">
    <property type="term" value="P:branching involved in ureteric bud morphogenesis"/>
    <property type="evidence" value="ECO:0000250"/>
    <property type="project" value="UniProtKB"/>
</dbReference>
<dbReference type="GO" id="GO:0060070">
    <property type="term" value="P:canonical Wnt signaling pathway"/>
    <property type="evidence" value="ECO:0000266"/>
    <property type="project" value="RGD"/>
</dbReference>
<dbReference type="GO" id="GO:0002042">
    <property type="term" value="P:cell migration involved in sprouting angiogenesis"/>
    <property type="evidence" value="ECO:0000266"/>
    <property type="project" value="RGD"/>
</dbReference>
<dbReference type="GO" id="GO:0008283">
    <property type="term" value="P:cell population proliferation"/>
    <property type="evidence" value="ECO:0000266"/>
    <property type="project" value="RGD"/>
</dbReference>
<dbReference type="GO" id="GO:0071260">
    <property type="term" value="P:cellular response to mechanical stimulus"/>
    <property type="evidence" value="ECO:0000270"/>
    <property type="project" value="RGD"/>
</dbReference>
<dbReference type="GO" id="GO:0021930">
    <property type="term" value="P:cerebellar granule cell precursor proliferation"/>
    <property type="evidence" value="ECO:0000266"/>
    <property type="project" value="RGD"/>
</dbReference>
<dbReference type="GO" id="GO:0060591">
    <property type="term" value="P:chondroblast differentiation"/>
    <property type="evidence" value="ECO:0000266"/>
    <property type="project" value="RGD"/>
</dbReference>
<dbReference type="GO" id="GO:0060128">
    <property type="term" value="P:corticotropin hormone secreting cell differentiation"/>
    <property type="evidence" value="ECO:0000266"/>
    <property type="project" value="RGD"/>
</dbReference>
<dbReference type="GO" id="GO:0009792">
    <property type="term" value="P:embryo development ending in birth or egg hatching"/>
    <property type="evidence" value="ECO:0000315"/>
    <property type="project" value="RGD"/>
</dbReference>
<dbReference type="GO" id="GO:0043542">
    <property type="term" value="P:endothelial cell migration"/>
    <property type="evidence" value="ECO:0000266"/>
    <property type="project" value="RGD"/>
</dbReference>
<dbReference type="GO" id="GO:0001935">
    <property type="term" value="P:endothelial cell proliferation"/>
    <property type="evidence" value="ECO:0000266"/>
    <property type="project" value="RGD"/>
</dbReference>
<dbReference type="GO" id="GO:0050673">
    <property type="term" value="P:epithelial cell proliferation"/>
    <property type="evidence" value="ECO:0000266"/>
    <property type="project" value="RGD"/>
</dbReference>
<dbReference type="GO" id="GO:0070371">
    <property type="term" value="P:ERK1 and ERK2 cascade"/>
    <property type="evidence" value="ECO:0000266"/>
    <property type="project" value="RGD"/>
</dbReference>
<dbReference type="GO" id="GO:0008543">
    <property type="term" value="P:fibroblast growth factor receptor signaling pathway"/>
    <property type="evidence" value="ECO:0000353"/>
    <property type="project" value="MGI"/>
</dbReference>
<dbReference type="GO" id="GO:0010001">
    <property type="term" value="P:glial cell differentiation"/>
    <property type="evidence" value="ECO:0000266"/>
    <property type="project" value="RGD"/>
</dbReference>
<dbReference type="GO" id="GO:0014843">
    <property type="term" value="P:growth factor dependent regulation of skeletal muscle satellite cell proliferation"/>
    <property type="evidence" value="ECO:0000266"/>
    <property type="project" value="RGD"/>
</dbReference>
<dbReference type="GO" id="GO:0030214">
    <property type="term" value="P:hyaluronan catabolic process"/>
    <property type="evidence" value="ECO:0000266"/>
    <property type="project" value="RGD"/>
</dbReference>
<dbReference type="GO" id="GO:0042491">
    <property type="term" value="P:inner ear auditory receptor cell differentiation"/>
    <property type="evidence" value="ECO:0000266"/>
    <property type="project" value="RGD"/>
</dbReference>
<dbReference type="GO" id="GO:0030324">
    <property type="term" value="P:lung development"/>
    <property type="evidence" value="ECO:0000266"/>
    <property type="project" value="RGD"/>
</dbReference>
<dbReference type="GO" id="GO:1904977">
    <property type="term" value="P:lymphatic endothelial cell migration"/>
    <property type="evidence" value="ECO:0000266"/>
    <property type="project" value="RGD"/>
</dbReference>
<dbReference type="GO" id="GO:0060644">
    <property type="term" value="P:mammary gland epithelial cell differentiation"/>
    <property type="evidence" value="ECO:0000266"/>
    <property type="project" value="RGD"/>
</dbReference>
<dbReference type="GO" id="GO:0043537">
    <property type="term" value="P:negative regulation of blood vessel endothelial cell migration"/>
    <property type="evidence" value="ECO:0000266"/>
    <property type="project" value="RGD"/>
</dbReference>
<dbReference type="GO" id="GO:0008285">
    <property type="term" value="P:negative regulation of cell population proliferation"/>
    <property type="evidence" value="ECO:0000266"/>
    <property type="project" value="RGD"/>
</dbReference>
<dbReference type="GO" id="GO:0010764">
    <property type="term" value="P:negative regulation of fibroblast migration"/>
    <property type="evidence" value="ECO:0000266"/>
    <property type="project" value="RGD"/>
</dbReference>
<dbReference type="GO" id="GO:1903377">
    <property type="term" value="P:negative regulation of oxidative stress-induced neuron intrinsic apoptotic signaling pathway"/>
    <property type="evidence" value="ECO:0000315"/>
    <property type="project" value="RGD"/>
</dbReference>
<dbReference type="GO" id="GO:2000647">
    <property type="term" value="P:negative regulation of stem cell proliferation"/>
    <property type="evidence" value="ECO:0000266"/>
    <property type="project" value="RGD"/>
</dbReference>
<dbReference type="GO" id="GO:0061045">
    <property type="term" value="P:negative regulation of wound healing"/>
    <property type="evidence" value="ECO:0000266"/>
    <property type="project" value="RGD"/>
</dbReference>
<dbReference type="GO" id="GO:0007405">
    <property type="term" value="P:neuroblast proliferation"/>
    <property type="evidence" value="ECO:0000266"/>
    <property type="project" value="RGD"/>
</dbReference>
<dbReference type="GO" id="GO:0060563">
    <property type="term" value="P:neuroepithelial cell differentiation"/>
    <property type="evidence" value="ECO:0000266"/>
    <property type="project" value="RGD"/>
</dbReference>
<dbReference type="GO" id="GO:0022008">
    <property type="term" value="P:neurogenesis"/>
    <property type="evidence" value="ECO:0000318"/>
    <property type="project" value="GO_Central"/>
</dbReference>
<dbReference type="GO" id="GO:0001759">
    <property type="term" value="P:organ induction"/>
    <property type="evidence" value="ECO:0000266"/>
    <property type="project" value="RGD"/>
</dbReference>
<dbReference type="GO" id="GO:0001649">
    <property type="term" value="P:osteoblast differentiation"/>
    <property type="evidence" value="ECO:0000266"/>
    <property type="project" value="RGD"/>
</dbReference>
<dbReference type="GO" id="GO:0038001">
    <property type="term" value="P:paracrine signaling"/>
    <property type="evidence" value="ECO:0000314"/>
    <property type="project" value="ARUK-UCL"/>
</dbReference>
<dbReference type="GO" id="GO:0043491">
    <property type="term" value="P:phosphatidylinositol 3-kinase/protein kinase B signal transduction"/>
    <property type="evidence" value="ECO:0000266"/>
    <property type="project" value="RGD"/>
</dbReference>
<dbReference type="GO" id="GO:0045766">
    <property type="term" value="P:positive regulation of angiogenesis"/>
    <property type="evidence" value="ECO:0000250"/>
    <property type="project" value="UniProtKB"/>
</dbReference>
<dbReference type="GO" id="GO:1905555">
    <property type="term" value="P:positive regulation of blood vessel branching"/>
    <property type="evidence" value="ECO:0000266"/>
    <property type="project" value="RGD"/>
</dbReference>
<dbReference type="GO" id="GO:0043536">
    <property type="term" value="P:positive regulation of blood vessel endothelial cell migration"/>
    <property type="evidence" value="ECO:0000250"/>
    <property type="project" value="UniProtKB"/>
</dbReference>
<dbReference type="GO" id="GO:0090263">
    <property type="term" value="P:positive regulation of canonical Wnt signaling pathway"/>
    <property type="evidence" value="ECO:0000266"/>
    <property type="project" value="RGD"/>
</dbReference>
<dbReference type="GO" id="GO:0060045">
    <property type="term" value="P:positive regulation of cardiac muscle cell proliferation"/>
    <property type="evidence" value="ECO:0000314"/>
    <property type="project" value="RGD"/>
</dbReference>
<dbReference type="GO" id="GO:0051781">
    <property type="term" value="P:positive regulation of cell division"/>
    <property type="evidence" value="ECO:0007669"/>
    <property type="project" value="UniProtKB-KW"/>
</dbReference>
<dbReference type="GO" id="GO:0042660">
    <property type="term" value="P:positive regulation of cell fate specification"/>
    <property type="evidence" value="ECO:0000266"/>
    <property type="project" value="RGD"/>
</dbReference>
<dbReference type="GO" id="GO:0090050">
    <property type="term" value="P:positive regulation of cell migration involved in sprouting angiogenesis"/>
    <property type="evidence" value="ECO:0000250"/>
    <property type="project" value="UniProtKB"/>
</dbReference>
<dbReference type="GO" id="GO:0008284">
    <property type="term" value="P:positive regulation of cell population proliferation"/>
    <property type="evidence" value="ECO:0000314"/>
    <property type="project" value="RGD"/>
</dbReference>
<dbReference type="GO" id="GO:0021940">
    <property type="term" value="P:positive regulation of cerebellar granule cell precursor proliferation"/>
    <property type="evidence" value="ECO:0000266"/>
    <property type="project" value="RGD"/>
</dbReference>
<dbReference type="GO" id="GO:2000573">
    <property type="term" value="P:positive regulation of DNA biosynthetic process"/>
    <property type="evidence" value="ECO:0000266"/>
    <property type="project" value="RGD"/>
</dbReference>
<dbReference type="GO" id="GO:2001028">
    <property type="term" value="P:positive regulation of endothelial cell chemotaxis"/>
    <property type="evidence" value="ECO:0000266"/>
    <property type="project" value="RGD"/>
</dbReference>
<dbReference type="GO" id="GO:2000546">
    <property type="term" value="P:positive regulation of endothelial cell chemotaxis to fibroblast growth factor"/>
    <property type="evidence" value="ECO:0000266"/>
    <property type="project" value="RGD"/>
</dbReference>
<dbReference type="GO" id="GO:0010595">
    <property type="term" value="P:positive regulation of endothelial cell migration"/>
    <property type="evidence" value="ECO:0000266"/>
    <property type="project" value="RGD"/>
</dbReference>
<dbReference type="GO" id="GO:0001938">
    <property type="term" value="P:positive regulation of endothelial cell proliferation"/>
    <property type="evidence" value="ECO:0000266"/>
    <property type="project" value="RGD"/>
</dbReference>
<dbReference type="GO" id="GO:0050679">
    <property type="term" value="P:positive regulation of epithelial cell proliferation"/>
    <property type="evidence" value="ECO:0000266"/>
    <property type="project" value="RGD"/>
</dbReference>
<dbReference type="GO" id="GO:1905278">
    <property type="term" value="P:positive regulation of epithelial tube formation"/>
    <property type="evidence" value="ECO:0000266"/>
    <property type="project" value="RGD"/>
</dbReference>
<dbReference type="GO" id="GO:0070374">
    <property type="term" value="P:positive regulation of ERK1 and ERK2 cascade"/>
    <property type="evidence" value="ECO:0000314"/>
    <property type="project" value="RGD"/>
</dbReference>
<dbReference type="GO" id="GO:0010628">
    <property type="term" value="P:positive regulation of gene expression"/>
    <property type="evidence" value="ECO:0000266"/>
    <property type="project" value="RGD"/>
</dbReference>
<dbReference type="GO" id="GO:0045609">
    <property type="term" value="P:positive regulation of inner ear auditory receptor cell differentiation"/>
    <property type="evidence" value="ECO:0000266"/>
    <property type="project" value="RGD"/>
</dbReference>
<dbReference type="GO" id="GO:1902748">
    <property type="term" value="P:positive regulation of lens fiber cell differentiation"/>
    <property type="evidence" value="ECO:0000250"/>
    <property type="project" value="UniProtKB"/>
</dbReference>
<dbReference type="GO" id="GO:0043410">
    <property type="term" value="P:positive regulation of MAPK cascade"/>
    <property type="evidence" value="ECO:0000266"/>
    <property type="project" value="RGD"/>
</dbReference>
<dbReference type="GO" id="GO:0002052">
    <property type="term" value="P:positive regulation of neuroblast proliferation"/>
    <property type="evidence" value="ECO:0000266"/>
    <property type="project" value="RGD"/>
</dbReference>
<dbReference type="GO" id="GO:1902913">
    <property type="term" value="P:positive regulation of neuroepithelial cell differentiation"/>
    <property type="evidence" value="ECO:0000266"/>
    <property type="project" value="RGD"/>
</dbReference>
<dbReference type="GO" id="GO:0045669">
    <property type="term" value="P:positive regulation of osteoblast differentiation"/>
    <property type="evidence" value="ECO:0000266"/>
    <property type="project" value="RGD"/>
</dbReference>
<dbReference type="GO" id="GO:0051897">
    <property type="term" value="P:positive regulation of phosphatidylinositol 3-kinase/protein kinase B signal transduction"/>
    <property type="evidence" value="ECO:0000266"/>
    <property type="project" value="RGD"/>
</dbReference>
<dbReference type="GO" id="GO:0048661">
    <property type="term" value="P:positive regulation of smooth muscle cell proliferation"/>
    <property type="evidence" value="ECO:0000315"/>
    <property type="project" value="RGD"/>
</dbReference>
<dbReference type="GO" id="GO:1903672">
    <property type="term" value="P:positive regulation of sprouting angiogenesis"/>
    <property type="evidence" value="ECO:0000250"/>
    <property type="project" value="UniProtKB"/>
</dbReference>
<dbReference type="GO" id="GO:2000738">
    <property type="term" value="P:positive regulation of stem cell differentiation"/>
    <property type="evidence" value="ECO:0000266"/>
    <property type="project" value="RGD"/>
</dbReference>
<dbReference type="GO" id="GO:2000648">
    <property type="term" value="P:positive regulation of stem cell proliferation"/>
    <property type="evidence" value="ECO:0000266"/>
    <property type="project" value="RGD"/>
</dbReference>
<dbReference type="GO" id="GO:0045944">
    <property type="term" value="P:positive regulation of transcription by RNA polymerase II"/>
    <property type="evidence" value="ECO:0000266"/>
    <property type="project" value="RGD"/>
</dbReference>
<dbReference type="GO" id="GO:1904707">
    <property type="term" value="P:positive regulation of vascular associated smooth muscle cell proliferation"/>
    <property type="evidence" value="ECO:0000266"/>
    <property type="project" value="RGD"/>
</dbReference>
<dbReference type="GO" id="GO:1905564">
    <property type="term" value="P:positive regulation of vascular endothelial cell proliferation"/>
    <property type="evidence" value="ECO:0000266"/>
    <property type="project" value="RGD"/>
</dbReference>
<dbReference type="GO" id="GO:0051726">
    <property type="term" value="P:regulation of cell cycle"/>
    <property type="evidence" value="ECO:0000266"/>
    <property type="project" value="RGD"/>
</dbReference>
<dbReference type="GO" id="GO:0030334">
    <property type="term" value="P:regulation of cell migration"/>
    <property type="evidence" value="ECO:0000318"/>
    <property type="project" value="GO_Central"/>
</dbReference>
<dbReference type="GO" id="GO:2000544">
    <property type="term" value="P:regulation of endothelial cell chemotaxis to fibroblast growth factor"/>
    <property type="evidence" value="ECO:0000266"/>
    <property type="project" value="RGD"/>
</dbReference>
<dbReference type="GO" id="GO:0046668">
    <property type="term" value="P:regulation of retinal cell programmed cell death"/>
    <property type="evidence" value="ECO:0000266"/>
    <property type="project" value="RGD"/>
</dbReference>
<dbReference type="GO" id="GO:0051209">
    <property type="term" value="P:release of sequestered calcium ion into cytosol"/>
    <property type="evidence" value="ECO:0000266"/>
    <property type="project" value="RGD"/>
</dbReference>
<dbReference type="GO" id="GO:0048678">
    <property type="term" value="P:response to axon injury"/>
    <property type="evidence" value="ECO:0000266"/>
    <property type="project" value="RGD"/>
</dbReference>
<dbReference type="GO" id="GO:0045471">
    <property type="term" value="P:response to ethanol"/>
    <property type="evidence" value="ECO:0000315"/>
    <property type="project" value="RGD"/>
</dbReference>
<dbReference type="GO" id="GO:1904567">
    <property type="term" value="P:response to wortmannin"/>
    <property type="evidence" value="ECO:0000315"/>
    <property type="project" value="RGD"/>
</dbReference>
<dbReference type="GO" id="GO:0048864">
    <property type="term" value="P:stem cell development"/>
    <property type="evidence" value="ECO:0000266"/>
    <property type="project" value="RGD"/>
</dbReference>
<dbReference type="GO" id="GO:0048863">
    <property type="term" value="P:stem cell differentiation"/>
    <property type="evidence" value="ECO:0000266"/>
    <property type="project" value="RGD"/>
</dbReference>
<dbReference type="GO" id="GO:0072089">
    <property type="term" value="P:stem cell proliferation"/>
    <property type="evidence" value="ECO:0000266"/>
    <property type="project" value="RGD"/>
</dbReference>
<dbReference type="GO" id="GO:0021762">
    <property type="term" value="P:substantia nigra development"/>
    <property type="evidence" value="ECO:0000266"/>
    <property type="project" value="RGD"/>
</dbReference>
<dbReference type="GO" id="GO:0060129">
    <property type="term" value="P:thyroid-stimulating hormone-secreting cell differentiation"/>
    <property type="evidence" value="ECO:0000266"/>
    <property type="project" value="RGD"/>
</dbReference>
<dbReference type="GO" id="GO:0006366">
    <property type="term" value="P:transcription by RNA polymerase II"/>
    <property type="evidence" value="ECO:0000266"/>
    <property type="project" value="RGD"/>
</dbReference>
<dbReference type="GO" id="GO:0042060">
    <property type="term" value="P:wound healing"/>
    <property type="evidence" value="ECO:0000266"/>
    <property type="project" value="RGD"/>
</dbReference>
<dbReference type="CDD" id="cd23314">
    <property type="entry name" value="beta-trefoil_FGF2"/>
    <property type="match status" value="1"/>
</dbReference>
<dbReference type="FunFam" id="2.80.10.50:FF:000020">
    <property type="entry name" value="Fibroblast growth factor 1"/>
    <property type="match status" value="1"/>
</dbReference>
<dbReference type="Gene3D" id="2.80.10.50">
    <property type="match status" value="1"/>
</dbReference>
<dbReference type="InterPro" id="IPR002209">
    <property type="entry name" value="Fibroblast_GF_fam"/>
</dbReference>
<dbReference type="InterPro" id="IPR008996">
    <property type="entry name" value="IL1/FGF"/>
</dbReference>
<dbReference type="PANTHER" id="PTHR11486">
    <property type="entry name" value="FIBROBLAST GROWTH FACTOR"/>
    <property type="match status" value="1"/>
</dbReference>
<dbReference type="Pfam" id="PF00167">
    <property type="entry name" value="FGF"/>
    <property type="match status" value="1"/>
</dbReference>
<dbReference type="PRINTS" id="PR00263">
    <property type="entry name" value="HBGFFGF"/>
</dbReference>
<dbReference type="PRINTS" id="PR00262">
    <property type="entry name" value="IL1HBGF"/>
</dbReference>
<dbReference type="SMART" id="SM00442">
    <property type="entry name" value="FGF"/>
    <property type="match status" value="1"/>
</dbReference>
<dbReference type="SUPFAM" id="SSF50353">
    <property type="entry name" value="Cytokine"/>
    <property type="match status" value="1"/>
</dbReference>
<dbReference type="PROSITE" id="PS00247">
    <property type="entry name" value="HBGF_FGF"/>
    <property type="match status" value="1"/>
</dbReference>
<proteinExistence type="evidence at protein level"/>
<sequence>MAAGSITSLPALPEDGGGAFPPGHFKDPKRLYCKNGGFFLRIHPDGRVDGVREKSDPHVKLQLQAEERGVVSIKGVCANRYLAMKEDGRLLASKCVTEECFFFERLESNNYNTYRSRKYSSWYVALKRTGQYKLGSKTGPGQKAILFLPMSAKS</sequence>
<name>FGF2_RAT</name>
<reference key="1">
    <citation type="journal article" date="1988" name="Biochem. Biophys. Res. Commun.">
        <title>Complementary DNA cloning and sequencing of rat ovarian basic fibroblast growth factor and tissue distribution study of its mRNA.</title>
        <authorList>
            <person name="Shimasaki S."/>
            <person name="Emoto N."/>
            <person name="Koba A."/>
            <person name="Mercado M."/>
            <person name="Shibata F."/>
            <person name="Cooksey K."/>
            <person name="Baird A."/>
            <person name="Ling N."/>
        </authorList>
    </citation>
    <scope>NUCLEOTIDE SEQUENCE [MRNA]</scope>
    <source>
        <strain>Sprague-Dawley</strain>
        <tissue>Ovary</tissue>
    </source>
</reference>
<reference key="2">
    <citation type="journal article" date="1988" name="Nucleic Acids Res.">
        <title>Nucleotide sequence of rat basic fibroblast growth factor cDNA.</title>
        <authorList>
            <person name="Kurokawa T."/>
            <person name="Seno M."/>
            <person name="Igarashi K."/>
        </authorList>
    </citation>
    <scope>NUCLEOTIDE SEQUENCE [MRNA]</scope>
    <source>
        <tissue>Brain</tissue>
    </source>
</reference>
<reference key="3">
    <citation type="journal article" date="1997" name="J. Neurochem.">
        <title>Cloning of the rat fibroblast growth factor-2 promoter region and its response to mitogenic stimuli in glioma C6 cells.</title>
        <authorList>
            <person name="Pasumarthi K.B.S."/>
            <person name="Jin Y."/>
            <person name="Cattini P.A."/>
        </authorList>
    </citation>
    <scope>NUCLEOTIDE SEQUENCE [GENOMIC DNA] OF 1-28</scope>
    <source>
        <strain>Sprague-Dawley</strain>
        <tissue>Testis</tissue>
    </source>
</reference>
<reference key="4">
    <citation type="journal article" date="1992" name="Biochim. Biophys. Acta">
        <title>PCR detection of the rat brain basic fibroblast growth factor (bFGF) mRNA containing a unique 3' untranslated region.</title>
        <authorList>
            <person name="El-Husseini A.E.-D."/>
            <person name="Paterson J.A."/>
            <person name="Myal Y."/>
            <person name="Shiu R.P.C."/>
        </authorList>
    </citation>
    <scope>NUCLEOTIDE SEQUENCE [MRNA] OF 35-154</scope>
    <source>
        <strain>Sprague-Dawley</strain>
        <tissue>Brain</tissue>
    </source>
</reference>
<reference key="5">
    <citation type="journal article" date="1997" name="J. Biol. Chem.">
        <title>OCI-5/rat glypican-3 binds to fibroblast growth factor-2 but not to insulin-like growth factor-2.</title>
        <authorList>
            <person name="Song H.H."/>
            <person name="Shi W."/>
            <person name="Filmus J."/>
        </authorList>
    </citation>
    <scope>INTERACTION WITH GPC3</scope>
</reference>
<accession>P13109</accession>
<keyword id="KW-0037">Angiogenesis</keyword>
<keyword id="KW-0217">Developmental protein</keyword>
<keyword id="KW-0221">Differentiation</keyword>
<keyword id="KW-0339">Growth factor</keyword>
<keyword id="KW-0358">Heparin-binding</keyword>
<keyword id="KW-1017">Isopeptide bond</keyword>
<keyword id="KW-0497">Mitogen</keyword>
<keyword id="KW-0539">Nucleus</keyword>
<keyword id="KW-0597">Phosphoprotein</keyword>
<keyword id="KW-1185">Reference proteome</keyword>
<keyword id="KW-0964">Secreted</keyword>
<keyword id="KW-0832">Ubl conjugation</keyword>
<organism>
    <name type="scientific">Rattus norvegicus</name>
    <name type="common">Rat</name>
    <dbReference type="NCBI Taxonomy" id="10116"/>
    <lineage>
        <taxon>Eukaryota</taxon>
        <taxon>Metazoa</taxon>
        <taxon>Chordata</taxon>
        <taxon>Craniata</taxon>
        <taxon>Vertebrata</taxon>
        <taxon>Euteleostomi</taxon>
        <taxon>Mammalia</taxon>
        <taxon>Eutheria</taxon>
        <taxon>Euarchontoglires</taxon>
        <taxon>Glires</taxon>
        <taxon>Rodentia</taxon>
        <taxon>Myomorpha</taxon>
        <taxon>Muroidea</taxon>
        <taxon>Muridae</taxon>
        <taxon>Murinae</taxon>
        <taxon>Rattus</taxon>
    </lineage>
</organism>
<gene>
    <name type="primary">Fgf2</name>
    <name type="synonym">Fgf-2</name>
</gene>
<evidence type="ECO:0000250" key="1"/>
<evidence type="ECO:0000250" key="2">
    <source>
        <dbReference type="UniProtKB" id="P09038"/>
    </source>
</evidence>
<evidence type="ECO:0000250" key="3">
    <source>
        <dbReference type="UniProtKB" id="P15655"/>
    </source>
</evidence>
<evidence type="ECO:0000256" key="4">
    <source>
        <dbReference type="SAM" id="MobiDB-lite"/>
    </source>
</evidence>
<evidence type="ECO:0000269" key="5">
    <source>
    </source>
</evidence>
<evidence type="ECO:0000305" key="6"/>
<feature type="propeptide" id="PRO_0000008938">
    <location>
        <begin position="1"/>
        <end position="9"/>
    </location>
</feature>
<feature type="chain" id="PRO_0000008939" description="Fibroblast growth factor 2">
    <location>
        <begin position="10"/>
        <end position="154"/>
    </location>
</feature>
<feature type="region of interest" description="Disordered" evidence="4">
    <location>
        <begin position="1"/>
        <end position="20"/>
    </location>
</feature>
<feature type="region of interest" description="Heparin-binding" evidence="1">
    <location>
        <begin position="127"/>
        <end position="143"/>
    </location>
</feature>
<feature type="binding site" evidence="1">
    <location>
        <position position="35"/>
    </location>
    <ligand>
        <name>heparin</name>
        <dbReference type="ChEBI" id="CHEBI:28304"/>
    </ligand>
</feature>
<feature type="site" description="Important for interaction with integrin" evidence="2">
    <location>
        <position position="127"/>
    </location>
</feature>
<feature type="site" description="Important for interaction with integrin" evidence="2">
    <location>
        <position position="128"/>
    </location>
</feature>
<feature type="site" description="Important for interaction with integrin" evidence="2">
    <location>
        <position position="133"/>
    </location>
</feature>
<feature type="modified residue" description="Phosphotyrosine; by TEC" evidence="2">
    <location>
        <position position="81"/>
    </location>
</feature>
<feature type="cross-link" description="Glycyl lysine isopeptide (Lys-Gly) (interchain with G-Cter in SUMO1)" evidence="2">
    <location>
        <position position="94"/>
    </location>
</feature>